<reference key="1">
    <citation type="journal article" date="1995" name="J. Mol. Evol.">
        <title>Sequence analysis and structural features of the largest known protamine isolated from the sperm of the archaeogastropod Monodonta turbinata.</title>
        <authorList>
            <person name="Daban M."/>
            <person name="Martinage A."/>
            <person name="Kouach M."/>
            <person name="Chiva M."/>
            <person name="Subirana J.A."/>
            <person name="Sautiere P."/>
        </authorList>
    </citation>
    <scope>PROTEIN SEQUENCE</scope>
    <source>
        <tissue>Sperm</tissue>
    </source>
</reference>
<sequence length="106" mass="13477">ARAVRRRRARSRSRSRKSRSRSRSAKRSASRRRSRSAGRRRRRRTASRRRRRSASRRRSVSRRRRRRSRKSRGRRRRGRKVRRRRVKRAGRKGRRRTRRRRRRARR</sequence>
<comment type="subcellular location">
    <subcellularLocation>
        <location evidence="2">Nucleus</location>
    </subcellularLocation>
    <subcellularLocation>
        <location evidence="2">Chromosome</location>
    </subcellularLocation>
</comment>
<comment type="tissue specificity">
    <text>Sperm.</text>
</comment>
<organism>
    <name type="scientific">Phorcus turbinatus</name>
    <name type="common">Sea snail</name>
    <name type="synonym">Osilinus turbinatus</name>
    <dbReference type="NCBI Taxonomy" id="43341"/>
    <lineage>
        <taxon>Eukaryota</taxon>
        <taxon>Metazoa</taxon>
        <taxon>Spiralia</taxon>
        <taxon>Lophotrochozoa</taxon>
        <taxon>Mollusca</taxon>
        <taxon>Gastropoda</taxon>
        <taxon>Vetigastropoda</taxon>
        <taxon>Trochida</taxon>
        <taxon>Trochoidea</taxon>
        <taxon>Trochidae</taxon>
        <taxon>Cantharidinae</taxon>
        <taxon>Phorcus</taxon>
    </lineage>
</organism>
<keyword id="KW-0158">Chromosome</keyword>
<keyword id="KW-0903">Direct protein sequencing</keyword>
<keyword id="KW-0238">DNA-binding</keyword>
<keyword id="KW-0539">Nucleus</keyword>
<keyword id="KW-0677">Repeat</keyword>
<proteinExistence type="evidence at protein level"/>
<dbReference type="GO" id="GO:0005694">
    <property type="term" value="C:chromosome"/>
    <property type="evidence" value="ECO:0007669"/>
    <property type="project" value="UniProtKB-SubCell"/>
</dbReference>
<dbReference type="GO" id="GO:0005634">
    <property type="term" value="C:nucleus"/>
    <property type="evidence" value="ECO:0007669"/>
    <property type="project" value="UniProtKB-SubCell"/>
</dbReference>
<dbReference type="GO" id="GO:0003677">
    <property type="term" value="F:DNA binding"/>
    <property type="evidence" value="ECO:0007669"/>
    <property type="project" value="UniProtKB-KW"/>
</dbReference>
<accession>P0C230</accession>
<feature type="chain" id="PRO_0000260280" description="Protamine">
    <location>
        <begin position="1"/>
        <end position="106"/>
    </location>
</feature>
<feature type="region of interest" description="Disordered" evidence="1">
    <location>
        <begin position="1"/>
        <end position="106"/>
    </location>
</feature>
<protein>
    <recommendedName>
        <fullName>Protamine</fullName>
    </recommendedName>
</protein>
<evidence type="ECO:0000256" key="1">
    <source>
        <dbReference type="SAM" id="MobiDB-lite"/>
    </source>
</evidence>
<evidence type="ECO:0000305" key="2"/>
<name>PRT_PHOTU</name>